<gene>
    <name evidence="5" type="primary">PIKS-2</name>
</gene>
<keyword id="KW-0067">ATP-binding</keyword>
<keyword id="KW-0175">Coiled coil</keyword>
<keyword id="KW-0433">Leucine-rich repeat</keyword>
<keyword id="KW-0547">Nucleotide-binding</keyword>
<keyword id="KW-0611">Plant defense</keyword>
<keyword id="KW-0677">Repeat</keyword>
<protein>
    <recommendedName>
        <fullName evidence="4">Disease resistance protein Piks-2</fullName>
    </recommendedName>
    <alternativeName>
        <fullName evidence="5">NBS-LRR class disease resistance protein Piks-2</fullName>
    </alternativeName>
</protein>
<proteinExistence type="inferred from homology"/>
<dbReference type="EMBL" id="HQ662329">
    <property type="protein sequence ID" value="AET36548.1"/>
    <property type="molecule type" value="Genomic_DNA"/>
</dbReference>
<dbReference type="SMR" id="P0DO10"/>
<dbReference type="GO" id="GO:0043531">
    <property type="term" value="F:ADP binding"/>
    <property type="evidence" value="ECO:0007669"/>
    <property type="project" value="InterPro"/>
</dbReference>
<dbReference type="GO" id="GO:0005524">
    <property type="term" value="F:ATP binding"/>
    <property type="evidence" value="ECO:0007669"/>
    <property type="project" value="UniProtKB-KW"/>
</dbReference>
<dbReference type="GO" id="GO:0006952">
    <property type="term" value="P:defense response"/>
    <property type="evidence" value="ECO:0007669"/>
    <property type="project" value="UniProtKB-KW"/>
</dbReference>
<dbReference type="GO" id="GO:0051707">
    <property type="term" value="P:response to other organism"/>
    <property type="evidence" value="ECO:0007669"/>
    <property type="project" value="UniProtKB-ARBA"/>
</dbReference>
<dbReference type="CDD" id="cd14798">
    <property type="entry name" value="RX-CC_like"/>
    <property type="match status" value="1"/>
</dbReference>
<dbReference type="FunFam" id="3.80.10.10:FF:000942">
    <property type="entry name" value="Disease resistance protein Pik-2"/>
    <property type="match status" value="1"/>
</dbReference>
<dbReference type="FunFam" id="3.80.10.10:FF:000943">
    <property type="entry name" value="Disease resistance protein Pik-2"/>
    <property type="match status" value="1"/>
</dbReference>
<dbReference type="FunFam" id="1.10.10.10:FF:000322">
    <property type="entry name" value="Probable disease resistance protein At1g63360"/>
    <property type="match status" value="1"/>
</dbReference>
<dbReference type="Gene3D" id="1.20.5.4130">
    <property type="match status" value="1"/>
</dbReference>
<dbReference type="Gene3D" id="1.10.8.430">
    <property type="entry name" value="Helical domain of apoptotic protease-activating factors"/>
    <property type="match status" value="1"/>
</dbReference>
<dbReference type="Gene3D" id="3.40.50.300">
    <property type="entry name" value="P-loop containing nucleotide triphosphate hydrolases"/>
    <property type="match status" value="1"/>
</dbReference>
<dbReference type="Gene3D" id="3.80.10.10">
    <property type="entry name" value="Ribonuclease Inhibitor"/>
    <property type="match status" value="2"/>
</dbReference>
<dbReference type="Gene3D" id="1.10.10.10">
    <property type="entry name" value="Winged helix-like DNA-binding domain superfamily/Winged helix DNA-binding domain"/>
    <property type="match status" value="1"/>
</dbReference>
<dbReference type="InterPro" id="IPR042197">
    <property type="entry name" value="Apaf_helical"/>
</dbReference>
<dbReference type="InterPro" id="IPR044974">
    <property type="entry name" value="Disease_R_plants"/>
</dbReference>
<dbReference type="InterPro" id="IPR032675">
    <property type="entry name" value="LRR_dom_sf"/>
</dbReference>
<dbReference type="InterPro" id="IPR055414">
    <property type="entry name" value="LRR_R13L4/SHOC2-like"/>
</dbReference>
<dbReference type="InterPro" id="IPR002182">
    <property type="entry name" value="NB-ARC"/>
</dbReference>
<dbReference type="InterPro" id="IPR027417">
    <property type="entry name" value="P-loop_NTPase"/>
</dbReference>
<dbReference type="InterPro" id="IPR038005">
    <property type="entry name" value="RX-like_CC"/>
</dbReference>
<dbReference type="InterPro" id="IPR041118">
    <property type="entry name" value="Rx_N"/>
</dbReference>
<dbReference type="InterPro" id="IPR036388">
    <property type="entry name" value="WH-like_DNA-bd_sf"/>
</dbReference>
<dbReference type="PANTHER" id="PTHR23155:SF1013">
    <property type="entry name" value="DISEASE RESISTANCE PROTEIN PIK6-NP"/>
    <property type="match status" value="1"/>
</dbReference>
<dbReference type="PANTHER" id="PTHR23155">
    <property type="entry name" value="DISEASE RESISTANCE PROTEIN RP"/>
    <property type="match status" value="1"/>
</dbReference>
<dbReference type="Pfam" id="PF23598">
    <property type="entry name" value="LRR_14"/>
    <property type="match status" value="2"/>
</dbReference>
<dbReference type="Pfam" id="PF00931">
    <property type="entry name" value="NB-ARC"/>
    <property type="match status" value="2"/>
</dbReference>
<dbReference type="Pfam" id="PF18052">
    <property type="entry name" value="Rx_N"/>
    <property type="match status" value="1"/>
</dbReference>
<dbReference type="Pfam" id="PF23559">
    <property type="entry name" value="WH_DRP"/>
    <property type="match status" value="1"/>
</dbReference>
<dbReference type="PRINTS" id="PR00364">
    <property type="entry name" value="DISEASERSIST"/>
</dbReference>
<dbReference type="SUPFAM" id="SSF52058">
    <property type="entry name" value="L domain-like"/>
    <property type="match status" value="1"/>
</dbReference>
<dbReference type="SUPFAM" id="SSF52540">
    <property type="entry name" value="P-loop containing nucleoside triphosphate hydrolases"/>
    <property type="match status" value="1"/>
</dbReference>
<organism>
    <name type="scientific">Oryza sativa subsp. japonica</name>
    <name type="common">Rice</name>
    <dbReference type="NCBI Taxonomy" id="39947"/>
    <lineage>
        <taxon>Eukaryota</taxon>
        <taxon>Viridiplantae</taxon>
        <taxon>Streptophyta</taxon>
        <taxon>Embryophyta</taxon>
        <taxon>Tracheophyta</taxon>
        <taxon>Spermatophyta</taxon>
        <taxon>Magnoliopsida</taxon>
        <taxon>Liliopsida</taxon>
        <taxon>Poales</taxon>
        <taxon>Poaceae</taxon>
        <taxon>BOP clade</taxon>
        <taxon>Oryzoideae</taxon>
        <taxon>Oryzeae</taxon>
        <taxon>Oryzinae</taxon>
        <taxon>Oryza</taxon>
        <taxon>Oryza sativa</taxon>
    </lineage>
</organism>
<comment type="function">
    <text evidence="1">Disease resistance (R) protein. Resistance proteins guard the plant against pathogens that contain an appropriate avirulence protein via an indirect interaction with this avirulence protein. That triggers a defense system including the hypersensitive response, which restricts the pathogen growth.</text>
</comment>
<comment type="similarity">
    <text evidence="4">Belongs to the disease resistance NB-LRR family.</text>
</comment>
<sequence>MELVVGASEATMKSLLGKLGNLLAQEYALISGIRGDIQYINDELASMQAFLRDLSNVPEGHSHGHRMKDWMKQIRDIAYDVEDCIDDFAHRLPQDSISDAKWSFLLTKIYELWTWWPRRVIASNIAQLKVRAQQIADRRSRYGVNNPEHLDSSSSARTRAVNYEIAEYQVTSPQIIGIKEPVGMKTVMEELEVWLTNPQAENGQAVLSIVGFGGVGKTTIATALYRKVSEKFQCRASVAVSQNYDQGKVLNSILSQVSNQEQGSSTTISEKKNLTSGAKSMLKTALSLLRGNCICQPENDGNPDNTPIRLQETTDDDQNPRKLEQLLAEKSYILLIDDIWSAETWESIRSILPKNNKGGRIIVTTRFQAVGSTCSPLETDRLHTVDFLTDDESQNLFNTSICESKIRKDSNKVDEQVPEEIWKICGGLPLAIVSMAGLVACNPRKACCDWSKLCKSLFPEQETPLTLDGVTRILDCCYNDLPADLKTCLLYLSIFPKGWKISRKRLSRRWIAEGFANEKQGLTQERVAEAYFNQLTRRNLVRPMEHGSNGKVKTFQVHDMVLEYIMSKSIEENFITVVGGHWQMTAPSNKVRRLSMQSSGSNRGSSTKGLNLAQVRSLTVFGNLNHVPFHSFNYGIIQVLDLEDWKGLKERHMTEICQMLLLKYLSIRRTEISKIPSKIQKLEYLETLDIRETYVRDLPKSIVQLKRIISILGGNKNTRKGLRLPQEKSKKPIKNPSPQGKTKEPAKKGFLSQEKGKGAMKALRVLSGIEIVEESSEVAAGLHQLTGLRKLAIYKLNITKGGDTFKQLQSSIEYLGSCGLQTLAINDENSEFINSLGDMPAPPRYLVALELSGKLEKLPKWITSITTLNKLTISVTVLRTETLEILHILPSLFSLTFAFSLSAAKQDQDIIKDILENNKLDSDGEIVIPAEGFKSLKLLRFFAPLVPKLSFLDKNAMPALEIIEMRFKDFEGLFGIEILENLREVHLKVSDGAEAITKFLVNDLKVNTEKPKVFVDGIVTA</sequence>
<feature type="chain" id="PRO_0000444670" description="Disease resistance protein Piks-2">
    <location>
        <begin position="1"/>
        <end position="1021"/>
    </location>
</feature>
<feature type="domain" description="NB-ARC" evidence="2">
    <location>
        <begin position="186"/>
        <end position="519"/>
    </location>
</feature>
<feature type="repeat" description="LRR 1" evidence="2">
    <location>
        <begin position="612"/>
        <end position="634"/>
    </location>
</feature>
<feature type="repeat" description="LRR 2" evidence="2">
    <location>
        <begin position="659"/>
        <end position="682"/>
    </location>
</feature>
<feature type="repeat" description="LRR 3" evidence="2">
    <location>
        <begin position="683"/>
        <end position="705"/>
    </location>
</feature>
<feature type="repeat" description="LRR 4" evidence="2">
    <location>
        <begin position="785"/>
        <end position="807"/>
    </location>
</feature>
<feature type="repeat" description="LRR 5" evidence="2">
    <location>
        <begin position="817"/>
        <end position="841"/>
    </location>
</feature>
<feature type="repeat" description="LRR 6" evidence="2">
    <location>
        <begin position="843"/>
        <end position="865"/>
    </location>
</feature>
<feature type="repeat" description="LRR 7" evidence="2">
    <location>
        <begin position="866"/>
        <end position="888"/>
    </location>
</feature>
<feature type="repeat" description="LRR 8" evidence="2">
    <location>
        <begin position="912"/>
        <end position="935"/>
    </location>
</feature>
<feature type="repeat" description="LRR 9" evidence="2">
    <location>
        <begin position="957"/>
        <end position="981"/>
    </location>
</feature>
<feature type="region of interest" description="Structured coiled coil (CC) domain" evidence="1">
    <location>
        <begin position="1"/>
        <end position="182"/>
    </location>
</feature>
<feature type="region of interest" description="Disordered" evidence="3">
    <location>
        <begin position="297"/>
        <end position="317"/>
    </location>
</feature>
<feature type="region of interest" description="Disordered" evidence="3">
    <location>
        <begin position="719"/>
        <end position="751"/>
    </location>
</feature>
<evidence type="ECO:0000250" key="1">
    <source>
        <dbReference type="UniProtKB" id="P0DO07"/>
    </source>
</evidence>
<evidence type="ECO:0000255" key="2"/>
<evidence type="ECO:0000256" key="3">
    <source>
        <dbReference type="SAM" id="MobiDB-lite"/>
    </source>
</evidence>
<evidence type="ECO:0000305" key="4"/>
<evidence type="ECO:0000312" key="5">
    <source>
        <dbReference type="EMBL" id="AET36548.1"/>
    </source>
</evidence>
<reference evidence="5" key="1">
    <citation type="submission" date="2010-11" db="EMBL/GenBank/DDBJ databases">
        <title>The rice blast resistance gene Piks forms a allelic series with Pik-m, Pik and Pik-p.</title>
        <authorList>
            <person name="Pan Q."/>
            <person name="Zhai C."/>
            <person name="Dong Z."/>
            <person name="Lin F."/>
            <person name="Wang L."/>
        </authorList>
    </citation>
    <scope>NUCLEOTIDE SEQUENCE [GENOMIC DNA]</scope>
</reference>
<accession>P0DO10</accession>
<accession>B5UBC0</accession>
<name>PIKS2_ORYSJ</name>